<keyword id="KW-0002">3D-structure</keyword>
<keyword id="KW-0051">Antiviral defense</keyword>
<keyword id="KW-0614">Plasmid</keyword>
<keyword id="KW-1185">Reference proteome</keyword>
<sequence>MSPGERFLDWLKRLQGQKAWTAARAAFRRSLAFPPGAYPRAMPYVEPFLAKGDWRQEEREAHYLVAALYALKDGDHQVGRTLARALWEKAQGSASVEKRFLALLEADRDQIAFRLRQAVALVEGGIDFARLLDDLLRWFSPERHVQARWAREYYGAGASEEEKKKEVEA</sequence>
<name>CSE2_THET8</name>
<feature type="chain" id="PRO_0000418433" description="CRISPR-associated protein Cse2">
    <location>
        <begin position="1"/>
        <end position="169"/>
    </location>
</feature>
<feature type="helix" evidence="3">
    <location>
        <begin position="3"/>
        <end position="15"/>
    </location>
</feature>
<feature type="helix" evidence="3">
    <location>
        <begin position="20"/>
        <end position="29"/>
    </location>
</feature>
<feature type="helix" evidence="3">
    <location>
        <begin position="30"/>
        <end position="32"/>
    </location>
</feature>
<feature type="helix" evidence="3">
    <location>
        <begin position="39"/>
        <end position="41"/>
    </location>
</feature>
<feature type="helix" evidence="3">
    <location>
        <begin position="42"/>
        <end position="49"/>
    </location>
</feature>
<feature type="helix" evidence="3">
    <location>
        <begin position="56"/>
        <end position="71"/>
    </location>
</feature>
<feature type="turn" evidence="3">
    <location>
        <begin position="72"/>
        <end position="74"/>
    </location>
</feature>
<feature type="helix" evidence="3">
    <location>
        <begin position="82"/>
        <end position="90"/>
    </location>
</feature>
<feature type="helix" evidence="3">
    <location>
        <begin position="96"/>
        <end position="104"/>
    </location>
</feature>
<feature type="turn" evidence="3">
    <location>
        <begin position="108"/>
        <end position="110"/>
    </location>
</feature>
<feature type="helix" evidence="3">
    <location>
        <begin position="111"/>
        <end position="121"/>
    </location>
</feature>
<feature type="helix" evidence="3">
    <location>
        <begin position="128"/>
        <end position="136"/>
    </location>
</feature>
<feature type="turn" evidence="3">
    <location>
        <begin position="137"/>
        <end position="139"/>
    </location>
</feature>
<feature type="helix" evidence="3">
    <location>
        <begin position="144"/>
        <end position="155"/>
    </location>
</feature>
<comment type="function">
    <text evidence="1">CRISPR (clustered regularly interspaced short palindromic repeat), is an adaptive immune system that provides protection against mobile genetic elements (viruses, transposable elements and conjugative plasmids). CRISPR clusters contain sequences complementary to antecedent mobile elements and target invading nucleic acids. CRISPR clusters are transcribed and processed into CRISPR RNA (crRNA) (By similarity).</text>
</comment>
<comment type="subunit">
    <text evidence="2">Homodimer.</text>
</comment>
<comment type="similarity">
    <text evidence="2">Belongs to the CRISPR-associated CasB/Cse2 family.</text>
</comment>
<geneLocation type="plasmid">
    <name>pTT27</name>
</geneLocation>
<protein>
    <recommendedName>
        <fullName>CRISPR-associated protein Cse2</fullName>
    </recommendedName>
    <alternativeName>
        <fullName>CRISPR type I-E/ECOLI-associated protein CasB/Cse2</fullName>
    </alternativeName>
</protein>
<proteinExistence type="evidence at protein level"/>
<organism>
    <name type="scientific">Thermus thermophilus (strain ATCC 27634 / DSM 579 / HB8)</name>
    <dbReference type="NCBI Taxonomy" id="300852"/>
    <lineage>
        <taxon>Bacteria</taxon>
        <taxon>Thermotogati</taxon>
        <taxon>Deinococcota</taxon>
        <taxon>Deinococci</taxon>
        <taxon>Thermales</taxon>
        <taxon>Thermaceae</taxon>
        <taxon>Thermus</taxon>
    </lineage>
</organism>
<accession>Q53VY0</accession>
<gene>
    <name type="primary">cse2</name>
    <name type="ordered locus">TTHB189</name>
</gene>
<dbReference type="EMBL" id="AP008227">
    <property type="protein sequence ID" value="BAD71985.1"/>
    <property type="molecule type" value="Genomic_DNA"/>
</dbReference>
<dbReference type="RefSeq" id="WP_011229115.1">
    <property type="nucleotide sequence ID" value="NC_006462.1"/>
</dbReference>
<dbReference type="RefSeq" id="YP_145428.1">
    <property type="nucleotide sequence ID" value="NC_006462.1"/>
</dbReference>
<dbReference type="PDB" id="2ZCA">
    <property type="method" value="X-ray"/>
    <property type="resolution" value="1.80 A"/>
    <property type="chains" value="A/B=1-169"/>
</dbReference>
<dbReference type="PDB" id="4H7A">
    <property type="method" value="X-ray"/>
    <property type="resolution" value="2.60 A"/>
    <property type="chains" value="A/B=1-156"/>
</dbReference>
<dbReference type="PDBsum" id="2ZCA"/>
<dbReference type="PDBsum" id="4H7A"/>
<dbReference type="SMR" id="Q53VY0"/>
<dbReference type="MINT" id="Q53VY0"/>
<dbReference type="EnsemblBacteria" id="BAD71985">
    <property type="protein sequence ID" value="BAD71985"/>
    <property type="gene ID" value="BAD71985"/>
</dbReference>
<dbReference type="GeneID" id="3167892"/>
<dbReference type="KEGG" id="ttj:TTHB189"/>
<dbReference type="PATRIC" id="fig|300852.9.peg.2140"/>
<dbReference type="HOGENOM" id="CLU_081588_3_0_0"/>
<dbReference type="EvolutionaryTrace" id="Q53VY0"/>
<dbReference type="Proteomes" id="UP000000532">
    <property type="component" value="Plasmid pTT27"/>
</dbReference>
<dbReference type="GO" id="GO:0051607">
    <property type="term" value="P:defense response to virus"/>
    <property type="evidence" value="ECO:0007669"/>
    <property type="project" value="UniProtKB-KW"/>
</dbReference>
<dbReference type="CDD" id="cd09670">
    <property type="entry name" value="Cse2_I-E"/>
    <property type="match status" value="1"/>
</dbReference>
<dbReference type="Gene3D" id="1.10.520.40">
    <property type="entry name" value="CRISPR-associated protein Cse2"/>
    <property type="match status" value="1"/>
</dbReference>
<dbReference type="InterPro" id="IPR013382">
    <property type="entry name" value="CRISPR-assoc_prot_Cse2"/>
</dbReference>
<dbReference type="InterPro" id="IPR038287">
    <property type="entry name" value="Cse2_sf"/>
</dbReference>
<dbReference type="NCBIfam" id="TIGR02548">
    <property type="entry name" value="casB_cse2"/>
    <property type="match status" value="1"/>
</dbReference>
<dbReference type="Pfam" id="PF09485">
    <property type="entry name" value="CRISPR_Cse2"/>
    <property type="match status" value="1"/>
</dbReference>
<reference key="1">
    <citation type="submission" date="2004-11" db="EMBL/GenBank/DDBJ databases">
        <title>Complete genome sequence of Thermus thermophilus HB8.</title>
        <authorList>
            <person name="Masui R."/>
            <person name="Kurokawa K."/>
            <person name="Nakagawa N."/>
            <person name="Tokunaga F."/>
            <person name="Koyama Y."/>
            <person name="Shibata T."/>
            <person name="Oshima T."/>
            <person name="Yokoyama S."/>
            <person name="Yasunaga T."/>
            <person name="Kuramitsu S."/>
        </authorList>
    </citation>
    <scope>NUCLEOTIDE SEQUENCE [LARGE SCALE GENOMIC DNA]</scope>
    <source>
        <strain>ATCC 27634 / DSM 579 / HB8</strain>
    </source>
</reference>
<reference key="2">
    <citation type="journal article" date="2008" name="Proteins">
        <title>X-ray crystal structure of a CRISPR-associated protein, Cse2, from Thermus thermophilus HB8.</title>
        <authorList>
            <person name="Agari Y."/>
            <person name="Yokoyama S."/>
            <person name="Kuramitsu S."/>
            <person name="Shinkai A."/>
        </authorList>
    </citation>
    <scope>X-RAY CRYSTALLOGRAPHY (1.80 ANGSTROMS)</scope>
    <source>
        <strain>ATCC 27634 / DSM 579 / HB8</strain>
    </source>
</reference>
<evidence type="ECO:0000250" key="1"/>
<evidence type="ECO:0000305" key="2"/>
<evidence type="ECO:0007829" key="3">
    <source>
        <dbReference type="PDB" id="2ZCA"/>
    </source>
</evidence>